<reference key="1">
    <citation type="journal article" date="2009" name="Appl. Environ. Microbiol.">
        <title>Three genomes from the phylum Acidobacteria provide insight into the lifestyles of these microorganisms in soils.</title>
        <authorList>
            <person name="Ward N.L."/>
            <person name="Challacombe J.F."/>
            <person name="Janssen P.H."/>
            <person name="Henrissat B."/>
            <person name="Coutinho P.M."/>
            <person name="Wu M."/>
            <person name="Xie G."/>
            <person name="Haft D.H."/>
            <person name="Sait M."/>
            <person name="Badger J."/>
            <person name="Barabote R.D."/>
            <person name="Bradley B."/>
            <person name="Brettin T.S."/>
            <person name="Brinkac L.M."/>
            <person name="Bruce D."/>
            <person name="Creasy T."/>
            <person name="Daugherty S.C."/>
            <person name="Davidsen T.M."/>
            <person name="DeBoy R.T."/>
            <person name="Detter J.C."/>
            <person name="Dodson R.J."/>
            <person name="Durkin A.S."/>
            <person name="Ganapathy A."/>
            <person name="Gwinn-Giglio M."/>
            <person name="Han C.S."/>
            <person name="Khouri H."/>
            <person name="Kiss H."/>
            <person name="Kothari S.P."/>
            <person name="Madupu R."/>
            <person name="Nelson K.E."/>
            <person name="Nelson W.C."/>
            <person name="Paulsen I."/>
            <person name="Penn K."/>
            <person name="Ren Q."/>
            <person name="Rosovitz M.J."/>
            <person name="Selengut J.D."/>
            <person name="Shrivastava S."/>
            <person name="Sullivan S.A."/>
            <person name="Tapia R."/>
            <person name="Thompson L.S."/>
            <person name="Watkins K.L."/>
            <person name="Yang Q."/>
            <person name="Yu C."/>
            <person name="Zafar N."/>
            <person name="Zhou L."/>
            <person name="Kuske C.R."/>
        </authorList>
    </citation>
    <scope>NUCLEOTIDE SEQUENCE [LARGE SCALE GENOMIC DNA]</scope>
    <source>
        <strain>Ellin345</strain>
    </source>
</reference>
<name>MRAZ_KORVE</name>
<dbReference type="EMBL" id="CP000360">
    <property type="protein sequence ID" value="ABF42640.1"/>
    <property type="molecule type" value="Genomic_DNA"/>
</dbReference>
<dbReference type="RefSeq" id="WP_011524439.1">
    <property type="nucleotide sequence ID" value="NC_008009.1"/>
</dbReference>
<dbReference type="SMR" id="Q1IKG0"/>
<dbReference type="STRING" id="204669.Acid345_3639"/>
<dbReference type="EnsemblBacteria" id="ABF42640">
    <property type="protein sequence ID" value="ABF42640"/>
    <property type="gene ID" value="Acid345_3639"/>
</dbReference>
<dbReference type="KEGG" id="aba:Acid345_3639"/>
<dbReference type="eggNOG" id="COG2001">
    <property type="taxonomic scope" value="Bacteria"/>
</dbReference>
<dbReference type="HOGENOM" id="CLU_107907_2_2_0"/>
<dbReference type="OrthoDB" id="9807753at2"/>
<dbReference type="Proteomes" id="UP000002432">
    <property type="component" value="Chromosome"/>
</dbReference>
<dbReference type="GO" id="GO:0005737">
    <property type="term" value="C:cytoplasm"/>
    <property type="evidence" value="ECO:0007669"/>
    <property type="project" value="UniProtKB-UniRule"/>
</dbReference>
<dbReference type="GO" id="GO:0009295">
    <property type="term" value="C:nucleoid"/>
    <property type="evidence" value="ECO:0007669"/>
    <property type="project" value="UniProtKB-SubCell"/>
</dbReference>
<dbReference type="GO" id="GO:0003700">
    <property type="term" value="F:DNA-binding transcription factor activity"/>
    <property type="evidence" value="ECO:0007669"/>
    <property type="project" value="UniProtKB-UniRule"/>
</dbReference>
<dbReference type="GO" id="GO:0000976">
    <property type="term" value="F:transcription cis-regulatory region binding"/>
    <property type="evidence" value="ECO:0007669"/>
    <property type="project" value="TreeGrafter"/>
</dbReference>
<dbReference type="GO" id="GO:2000143">
    <property type="term" value="P:negative regulation of DNA-templated transcription initiation"/>
    <property type="evidence" value="ECO:0007669"/>
    <property type="project" value="TreeGrafter"/>
</dbReference>
<dbReference type="CDD" id="cd16321">
    <property type="entry name" value="MraZ_C"/>
    <property type="match status" value="1"/>
</dbReference>
<dbReference type="CDD" id="cd16320">
    <property type="entry name" value="MraZ_N"/>
    <property type="match status" value="1"/>
</dbReference>
<dbReference type="Gene3D" id="3.40.1550.20">
    <property type="entry name" value="Transcriptional regulator MraZ domain"/>
    <property type="match status" value="1"/>
</dbReference>
<dbReference type="HAMAP" id="MF_01008">
    <property type="entry name" value="MraZ"/>
    <property type="match status" value="1"/>
</dbReference>
<dbReference type="InterPro" id="IPR003444">
    <property type="entry name" value="MraZ"/>
</dbReference>
<dbReference type="InterPro" id="IPR035644">
    <property type="entry name" value="MraZ_C"/>
</dbReference>
<dbReference type="InterPro" id="IPR020603">
    <property type="entry name" value="MraZ_dom"/>
</dbReference>
<dbReference type="InterPro" id="IPR035642">
    <property type="entry name" value="MraZ_N"/>
</dbReference>
<dbReference type="InterPro" id="IPR038619">
    <property type="entry name" value="MraZ_sf"/>
</dbReference>
<dbReference type="InterPro" id="IPR007159">
    <property type="entry name" value="SpoVT-AbrB_dom"/>
</dbReference>
<dbReference type="InterPro" id="IPR037914">
    <property type="entry name" value="SpoVT-AbrB_sf"/>
</dbReference>
<dbReference type="PANTHER" id="PTHR34701">
    <property type="entry name" value="TRANSCRIPTIONAL REGULATOR MRAZ"/>
    <property type="match status" value="1"/>
</dbReference>
<dbReference type="PANTHER" id="PTHR34701:SF1">
    <property type="entry name" value="TRANSCRIPTIONAL REGULATOR MRAZ"/>
    <property type="match status" value="1"/>
</dbReference>
<dbReference type="Pfam" id="PF02381">
    <property type="entry name" value="MraZ"/>
    <property type="match status" value="2"/>
</dbReference>
<dbReference type="SUPFAM" id="SSF89447">
    <property type="entry name" value="AbrB/MazE/MraZ-like"/>
    <property type="match status" value="1"/>
</dbReference>
<dbReference type="PROSITE" id="PS51740">
    <property type="entry name" value="SPOVT_ABRB"/>
    <property type="match status" value="2"/>
</dbReference>
<gene>
    <name evidence="1" type="primary">mraZ</name>
    <name type="ordered locus">Acid345_3639</name>
</gene>
<proteinExistence type="inferred from homology"/>
<keyword id="KW-0963">Cytoplasm</keyword>
<keyword id="KW-0238">DNA-binding</keyword>
<keyword id="KW-1185">Reference proteome</keyword>
<keyword id="KW-0677">Repeat</keyword>
<keyword id="KW-0804">Transcription</keyword>
<keyword id="KW-0805">Transcription regulation</keyword>
<feature type="chain" id="PRO_1000062837" description="Transcriptional regulator MraZ">
    <location>
        <begin position="1"/>
        <end position="147"/>
    </location>
</feature>
<feature type="domain" description="SpoVT-AbrB 1" evidence="2">
    <location>
        <begin position="5"/>
        <end position="52"/>
    </location>
</feature>
<feature type="domain" description="SpoVT-AbrB 2" evidence="2">
    <location>
        <begin position="81"/>
        <end position="124"/>
    </location>
</feature>
<protein>
    <recommendedName>
        <fullName>Transcriptional regulator MraZ</fullName>
    </recommendedName>
</protein>
<evidence type="ECO:0000255" key="1">
    <source>
        <dbReference type="HAMAP-Rule" id="MF_01008"/>
    </source>
</evidence>
<evidence type="ECO:0000255" key="2">
    <source>
        <dbReference type="PROSITE-ProRule" id="PRU01076"/>
    </source>
</evidence>
<organism>
    <name type="scientific">Koribacter versatilis (strain Ellin345)</name>
    <dbReference type="NCBI Taxonomy" id="204669"/>
    <lineage>
        <taxon>Bacteria</taxon>
        <taxon>Pseudomonadati</taxon>
        <taxon>Acidobacteriota</taxon>
        <taxon>Terriglobia</taxon>
        <taxon>Terriglobales</taxon>
        <taxon>Candidatus Korobacteraceae</taxon>
        <taxon>Candidatus Korobacter</taxon>
    </lineage>
</organism>
<comment type="subunit">
    <text evidence="1">Forms oligomers.</text>
</comment>
<comment type="subcellular location">
    <subcellularLocation>
        <location evidence="1">Cytoplasm</location>
        <location evidence="1">Nucleoid</location>
    </subcellularLocation>
</comment>
<comment type="similarity">
    <text evidence="1">Belongs to the MraZ family.</text>
</comment>
<accession>Q1IKG0</accession>
<sequence>MFRGNHPTRIDDKGRLKVPADFKREIEDKFQNQTFYVTSFNGKEARLYPMEEWERFEAKLAALPSLNPTRQKLLNVSNYYGQVVEMDGQGRVTIPGLLREAAEIKGEVAVMGFLQYLVVRNAEHLKNEIESAPFTAEDEKTLSDLGI</sequence>